<evidence type="ECO:0000250" key="1">
    <source>
        <dbReference type="UniProtKB" id="Q8WUQ7"/>
    </source>
</evidence>
<evidence type="ECO:0000255" key="2"/>
<evidence type="ECO:0000256" key="3">
    <source>
        <dbReference type="SAM" id="MobiDB-lite"/>
    </source>
</evidence>
<evidence type="ECO:0000269" key="4">
    <source>
    </source>
</evidence>
<evidence type="ECO:0000269" key="5">
    <source>
    </source>
</evidence>
<evidence type="ECO:0000305" key="6"/>
<feature type="chain" id="PRO_0000419266" description="Splicing factor Cactin">
    <location>
        <begin position="1"/>
        <end position="720"/>
    </location>
</feature>
<feature type="region of interest" description="Disordered" evidence="3">
    <location>
        <begin position="1"/>
        <end position="156"/>
    </location>
</feature>
<feature type="region of interest" description="Disordered" evidence="3">
    <location>
        <begin position="449"/>
        <end position="492"/>
    </location>
</feature>
<feature type="region of interest" description="Disordered" evidence="3">
    <location>
        <begin position="512"/>
        <end position="541"/>
    </location>
</feature>
<feature type="coiled-coil region" evidence="2">
    <location>
        <begin position="109"/>
        <end position="159"/>
    </location>
</feature>
<feature type="coiled-coil region" evidence="2">
    <location>
        <begin position="206"/>
        <end position="236"/>
    </location>
</feature>
<feature type="coiled-coil region" evidence="2">
    <location>
        <begin position="346"/>
        <end position="375"/>
    </location>
</feature>
<feature type="compositionally biased region" description="Basic residues" evidence="3">
    <location>
        <begin position="1"/>
        <end position="15"/>
    </location>
</feature>
<feature type="compositionally biased region" description="Basic and acidic residues" evidence="3">
    <location>
        <begin position="16"/>
        <end position="67"/>
    </location>
</feature>
<feature type="compositionally biased region" description="Basic residues" evidence="3">
    <location>
        <begin position="68"/>
        <end position="78"/>
    </location>
</feature>
<feature type="compositionally biased region" description="Low complexity" evidence="3">
    <location>
        <begin position="79"/>
        <end position="92"/>
    </location>
</feature>
<feature type="compositionally biased region" description="Basic and acidic residues" evidence="3">
    <location>
        <begin position="113"/>
        <end position="156"/>
    </location>
</feature>
<feature type="compositionally biased region" description="Acidic residues" evidence="3">
    <location>
        <begin position="465"/>
        <end position="489"/>
    </location>
</feature>
<feature type="compositionally biased region" description="Basic and acidic residues" evidence="3">
    <location>
        <begin position="512"/>
        <end position="521"/>
    </location>
</feature>
<feature type="compositionally biased region" description="Acidic residues" evidence="3">
    <location>
        <begin position="522"/>
        <end position="539"/>
    </location>
</feature>
<feature type="modified residue" description="Phosphoserine" evidence="5">
    <location>
        <position position="99"/>
    </location>
</feature>
<feature type="modified residue" description="Phosphoserine" evidence="5">
    <location>
        <position position="104"/>
    </location>
</feature>
<feature type="sequence conflict" description="In Ref. 1; AAF66981." evidence="6" ref="1">
    <original>EH</original>
    <variation>DD</variation>
    <location>
        <begin position="70"/>
        <end position="71"/>
    </location>
</feature>
<feature type="sequence conflict" description="In Ref. 1; AAF66981." evidence="6" ref="1">
    <original>V</original>
    <variation>M</variation>
    <location>
        <position position="93"/>
    </location>
</feature>
<comment type="function">
    <text evidence="1 4">Plays a role in pre-mRNA splicing by facilitating excision of a subset of introns (By similarity). Plays a role during early embryonic development (PubMed:10842059). Involved in the dorsal-ventral embryonic patterning (PubMed:10842059). Probably acts as a negative regulator of the NF-kappa-B (Rel) signaling pathway (PubMed:10842059).</text>
</comment>
<comment type="subunit">
    <text evidence="4">Interacts with cact.</text>
</comment>
<comment type="interaction">
    <interactant intactId="EBI-175417">
        <id>Q9VR99</id>
    </interactant>
    <interactant intactId="EBI-200600">
        <id>Q03017</id>
        <label>cact</label>
    </interactant>
    <organismsDiffer>false</organismsDiffer>
    <experiments>5</experiments>
</comment>
<comment type="subcellular location">
    <subcellularLocation>
        <location evidence="1">Nucleus</location>
    </subcellularLocation>
    <subcellularLocation>
        <location evidence="1">Cytoplasm</location>
    </subcellularLocation>
</comment>
<comment type="tissue specificity">
    <text evidence="4">Expressed in ovary (at protein level).</text>
</comment>
<comment type="developmental stage">
    <text evidence="4">Expressed during embryogenesis (at protein level).</text>
</comment>
<comment type="similarity">
    <text evidence="6">Belongs to the CACTIN family.</text>
</comment>
<comment type="sequence caution" evidence="6">
    <conflict type="frameshift">
        <sequence resource="EMBL-CDS" id="AAF66981"/>
    </conflict>
</comment>
<proteinExistence type="evidence at protein level"/>
<name>CATIN_DROME</name>
<gene>
    <name type="primary">cactin</name>
    <name type="ORF">CG1676</name>
</gene>
<organism>
    <name type="scientific">Drosophila melanogaster</name>
    <name type="common">Fruit fly</name>
    <dbReference type="NCBI Taxonomy" id="7227"/>
    <lineage>
        <taxon>Eukaryota</taxon>
        <taxon>Metazoa</taxon>
        <taxon>Ecdysozoa</taxon>
        <taxon>Arthropoda</taxon>
        <taxon>Hexapoda</taxon>
        <taxon>Insecta</taxon>
        <taxon>Pterygota</taxon>
        <taxon>Neoptera</taxon>
        <taxon>Endopterygota</taxon>
        <taxon>Diptera</taxon>
        <taxon>Brachycera</taxon>
        <taxon>Muscomorpha</taxon>
        <taxon>Ephydroidea</taxon>
        <taxon>Drosophilidae</taxon>
        <taxon>Drosophila</taxon>
        <taxon>Sophophora</taxon>
    </lineage>
</organism>
<protein>
    <recommendedName>
        <fullName evidence="6">Splicing factor Cactin</fullName>
    </recommendedName>
    <alternativeName>
        <fullName>Cactus-interacting protein</fullName>
    </alternativeName>
</protein>
<keyword id="KW-0175">Coiled coil</keyword>
<keyword id="KW-0963">Cytoplasm</keyword>
<keyword id="KW-0217">Developmental protein</keyword>
<keyword id="KW-0539">Nucleus</keyword>
<keyword id="KW-0597">Phosphoprotein</keyword>
<keyword id="KW-1185">Reference proteome</keyword>
<dbReference type="EMBL" id="AF245116">
    <property type="protein sequence ID" value="AAF66981.1"/>
    <property type="status" value="ALT_FRAME"/>
    <property type="molecule type" value="mRNA"/>
</dbReference>
<dbReference type="EMBL" id="AE014298">
    <property type="protein sequence ID" value="AAF50904.3"/>
    <property type="molecule type" value="Genomic_DNA"/>
</dbReference>
<dbReference type="RefSeq" id="NP_523422.4">
    <property type="nucleotide sequence ID" value="NM_078698.4"/>
</dbReference>
<dbReference type="SMR" id="Q9VR99"/>
<dbReference type="BioGRID" id="59332">
    <property type="interactions" value="48"/>
</dbReference>
<dbReference type="FunCoup" id="Q9VR99">
    <property type="interactions" value="2005"/>
</dbReference>
<dbReference type="IntAct" id="Q9VR99">
    <property type="interactions" value="13"/>
</dbReference>
<dbReference type="STRING" id="7227.FBpp0309346"/>
<dbReference type="iPTMnet" id="Q9VR99"/>
<dbReference type="PaxDb" id="7227-FBpp0076997"/>
<dbReference type="DNASU" id="33043"/>
<dbReference type="EnsemblMetazoa" id="FBtr0340400">
    <property type="protein sequence ID" value="FBpp0309346"/>
    <property type="gene ID" value="FBgn0031114"/>
</dbReference>
<dbReference type="GeneID" id="33043"/>
<dbReference type="KEGG" id="dme:Dmel_CG1676"/>
<dbReference type="UCSC" id="CG1676-RA">
    <property type="organism name" value="d. melanogaster"/>
</dbReference>
<dbReference type="AGR" id="FB:FBgn0031114"/>
<dbReference type="CTD" id="58509"/>
<dbReference type="FlyBase" id="FBgn0031114">
    <property type="gene designation" value="cactin"/>
</dbReference>
<dbReference type="VEuPathDB" id="VectorBase:FBgn0031114"/>
<dbReference type="eggNOG" id="KOG2370">
    <property type="taxonomic scope" value="Eukaryota"/>
</dbReference>
<dbReference type="GeneTree" id="ENSGT00950000183102"/>
<dbReference type="HOGENOM" id="CLU_011759_0_0_1"/>
<dbReference type="InParanoid" id="Q9VR99"/>
<dbReference type="OMA" id="HIDFWND"/>
<dbReference type="OrthoDB" id="265955at2759"/>
<dbReference type="PhylomeDB" id="Q9VR99"/>
<dbReference type="Reactome" id="R-DME-72163">
    <property type="pathway name" value="mRNA Splicing - Major Pathway"/>
</dbReference>
<dbReference type="SignaLink" id="Q9VR99"/>
<dbReference type="BioGRID-ORCS" id="33043">
    <property type="hits" value="0 hits in 1 CRISPR screen"/>
</dbReference>
<dbReference type="GenomeRNAi" id="33043"/>
<dbReference type="PRO" id="PR:Q9VR99"/>
<dbReference type="Proteomes" id="UP000000803">
    <property type="component" value="Chromosome X"/>
</dbReference>
<dbReference type="Bgee" id="FBgn0031114">
    <property type="expression patterns" value="Expressed in eye disc (Drosophila) and 53 other cell types or tissues"/>
</dbReference>
<dbReference type="ExpressionAtlas" id="Q9VR99">
    <property type="expression patterns" value="baseline and differential"/>
</dbReference>
<dbReference type="GO" id="GO:0071013">
    <property type="term" value="C:catalytic step 2 spliceosome"/>
    <property type="evidence" value="ECO:0007005"/>
    <property type="project" value="FlyBase"/>
</dbReference>
<dbReference type="GO" id="GO:0005737">
    <property type="term" value="C:cytoplasm"/>
    <property type="evidence" value="ECO:0000318"/>
    <property type="project" value="GO_Central"/>
</dbReference>
<dbReference type="GO" id="GO:0005681">
    <property type="term" value="C:spliceosomal complex"/>
    <property type="evidence" value="ECO:0000318"/>
    <property type="project" value="GO_Central"/>
</dbReference>
<dbReference type="GO" id="GO:0106222">
    <property type="term" value="F:lncRNA binding"/>
    <property type="evidence" value="ECO:0000314"/>
    <property type="project" value="FlyBase"/>
</dbReference>
<dbReference type="GO" id="GO:0003723">
    <property type="term" value="F:RNA binding"/>
    <property type="evidence" value="ECO:0000250"/>
    <property type="project" value="FlyBase"/>
</dbReference>
<dbReference type="GO" id="GO:0098586">
    <property type="term" value="P:cellular response to virus"/>
    <property type="evidence" value="ECO:0000315"/>
    <property type="project" value="FlyBase"/>
</dbReference>
<dbReference type="GO" id="GO:0009950">
    <property type="term" value="P:dorsal/ventral axis specification"/>
    <property type="evidence" value="ECO:0000315"/>
    <property type="project" value="UniProtKB"/>
</dbReference>
<dbReference type="GO" id="GO:0045292">
    <property type="term" value="P:mRNA cis splicing, via spliceosome"/>
    <property type="evidence" value="ECO:0000318"/>
    <property type="project" value="GO_Central"/>
</dbReference>
<dbReference type="GO" id="GO:0000398">
    <property type="term" value="P:mRNA splicing, via spliceosome"/>
    <property type="evidence" value="ECO:0000315"/>
    <property type="project" value="FlyBase"/>
</dbReference>
<dbReference type="GO" id="GO:0002760">
    <property type="term" value="P:positive regulation of antimicrobial humoral response"/>
    <property type="evidence" value="ECO:0000315"/>
    <property type="project" value="FlyBase"/>
</dbReference>
<dbReference type="GO" id="GO:0045752">
    <property type="term" value="P:positive regulation of Toll signaling pathway"/>
    <property type="evidence" value="ECO:0000315"/>
    <property type="project" value="FlyBase"/>
</dbReference>
<dbReference type="InterPro" id="IPR019134">
    <property type="entry name" value="Cactin_C"/>
</dbReference>
<dbReference type="InterPro" id="IPR018816">
    <property type="entry name" value="Cactin_central"/>
</dbReference>
<dbReference type="PANTHER" id="PTHR21737">
    <property type="entry name" value="POLYGLUTAMINE BINDING PROTEIN 1/MARVEL MEMBRANE-ASSOCIATING DOMAIN CONTAINING 3"/>
    <property type="match status" value="1"/>
</dbReference>
<dbReference type="PANTHER" id="PTHR21737:SF4">
    <property type="entry name" value="SPLICING FACTOR CACTIN"/>
    <property type="match status" value="1"/>
</dbReference>
<dbReference type="Pfam" id="PF10312">
    <property type="entry name" value="Cactin_mid"/>
    <property type="match status" value="1"/>
</dbReference>
<dbReference type="Pfam" id="PF09732">
    <property type="entry name" value="CactinC_cactus"/>
    <property type="match status" value="1"/>
</dbReference>
<dbReference type="SMART" id="SM01050">
    <property type="entry name" value="CactinC_cactus"/>
    <property type="match status" value="1"/>
</dbReference>
<sequence length="720" mass="86556">MPKEKSKHRHRSRSRERRDHRSPDPRSSRNRDRDREREREKDRDHRDHRDKERDQRREREKDKSRDKKREHKSRRRRSSSSSSSPSSSTSSSVPGAPRSPLVKSPMKLLQTLEARRLVEQKDRQRKKEELKAHETPEEKRARRLREKQAKEQRRRERMGWDNEYQTYSNEDNPFGDSNLTSTFHWGKKLEVEGLSNLSTKTVEVLSLQKQLENRRELEKVKKRRQERELERQVREDDLMMQQRAKEAVQFREWQRQEDQFHLEQARLRSEIRIRDGRAKPIDLLAQYVAAGNEPLEECLEMQMHEPYVLLNGLPVEELEDLLVDIKVYEELEQGKHIDFWNDMITIVQDELQRQQKLEAENSSLNQRRDGIHQAVVKDVADIFRGKNAQQLEEMRHRIEAKISGRADGVDISYWESLLSQLKAHMARARLRDRHQALLREKLSLLKRENDNETLQEKVAPQVKEEEMETQDAEDPEVEEGSPEDEEDPLNELRKTVRLYQAGNYSPRYIREEDFTGRRAQNEDVDEPEAEGLLYEEEDDERRTQRQRLLILHPERVDNNQLTPQELRMRNEAKQGMQGDEAEFSVETTLDAVPQLATDKYRPRKPRYFNRVHTGFEWNKYNQTHYDMDNPPPKIVQGYKFNIFYPDLMDKSQTPQYFLTPCADNGDFAVLRFHTGPPYEDIAFKIVNREWEFSYKRGFRCQFHNNIFQLWFHFKRYRYRR</sequence>
<accession>Q9VR99</accession>
<accession>Q9NBV5</accession>
<reference key="1">
    <citation type="journal article" date="2000" name="Mech. Dev.">
        <title>Cactin, a conserved protein that interacts with the Drosophila IkappaB protein cactus and modulates its function.</title>
        <authorList>
            <person name="Lin P."/>
            <person name="Huang L.H."/>
            <person name="Steward R."/>
        </authorList>
    </citation>
    <scope>NUCLEOTIDE SEQUENCE [MRNA]</scope>
    <scope>FUNCTION</scope>
    <scope>INTERACTION WITH CACT</scope>
    <scope>TISSUE SPECIFICITY</scope>
    <scope>DEVELOPMENTAL STAGE</scope>
    <source>
        <tissue>Ovary</tissue>
    </source>
</reference>
<reference key="2">
    <citation type="journal article" date="2000" name="Science">
        <title>The genome sequence of Drosophila melanogaster.</title>
        <authorList>
            <person name="Adams M.D."/>
            <person name="Celniker S.E."/>
            <person name="Holt R.A."/>
            <person name="Evans C.A."/>
            <person name="Gocayne J.D."/>
            <person name="Amanatides P.G."/>
            <person name="Scherer S.E."/>
            <person name="Li P.W."/>
            <person name="Hoskins R.A."/>
            <person name="Galle R.F."/>
            <person name="George R.A."/>
            <person name="Lewis S.E."/>
            <person name="Richards S."/>
            <person name="Ashburner M."/>
            <person name="Henderson S.N."/>
            <person name="Sutton G.G."/>
            <person name="Wortman J.R."/>
            <person name="Yandell M.D."/>
            <person name="Zhang Q."/>
            <person name="Chen L.X."/>
            <person name="Brandon R.C."/>
            <person name="Rogers Y.-H.C."/>
            <person name="Blazej R.G."/>
            <person name="Champe M."/>
            <person name="Pfeiffer B.D."/>
            <person name="Wan K.H."/>
            <person name="Doyle C."/>
            <person name="Baxter E.G."/>
            <person name="Helt G."/>
            <person name="Nelson C.R."/>
            <person name="Miklos G.L.G."/>
            <person name="Abril J.F."/>
            <person name="Agbayani A."/>
            <person name="An H.-J."/>
            <person name="Andrews-Pfannkoch C."/>
            <person name="Baldwin D."/>
            <person name="Ballew R.M."/>
            <person name="Basu A."/>
            <person name="Baxendale J."/>
            <person name="Bayraktaroglu L."/>
            <person name="Beasley E.M."/>
            <person name="Beeson K.Y."/>
            <person name="Benos P.V."/>
            <person name="Berman B.P."/>
            <person name="Bhandari D."/>
            <person name="Bolshakov S."/>
            <person name="Borkova D."/>
            <person name="Botchan M.R."/>
            <person name="Bouck J."/>
            <person name="Brokstein P."/>
            <person name="Brottier P."/>
            <person name="Burtis K.C."/>
            <person name="Busam D.A."/>
            <person name="Butler H."/>
            <person name="Cadieu E."/>
            <person name="Center A."/>
            <person name="Chandra I."/>
            <person name="Cherry J.M."/>
            <person name="Cawley S."/>
            <person name="Dahlke C."/>
            <person name="Davenport L.B."/>
            <person name="Davies P."/>
            <person name="de Pablos B."/>
            <person name="Delcher A."/>
            <person name="Deng Z."/>
            <person name="Mays A.D."/>
            <person name="Dew I."/>
            <person name="Dietz S.M."/>
            <person name="Dodson K."/>
            <person name="Doup L.E."/>
            <person name="Downes M."/>
            <person name="Dugan-Rocha S."/>
            <person name="Dunkov B.C."/>
            <person name="Dunn P."/>
            <person name="Durbin K.J."/>
            <person name="Evangelista C.C."/>
            <person name="Ferraz C."/>
            <person name="Ferriera S."/>
            <person name="Fleischmann W."/>
            <person name="Fosler C."/>
            <person name="Gabrielian A.E."/>
            <person name="Garg N.S."/>
            <person name="Gelbart W.M."/>
            <person name="Glasser K."/>
            <person name="Glodek A."/>
            <person name="Gong F."/>
            <person name="Gorrell J.H."/>
            <person name="Gu Z."/>
            <person name="Guan P."/>
            <person name="Harris M."/>
            <person name="Harris N.L."/>
            <person name="Harvey D.A."/>
            <person name="Heiman T.J."/>
            <person name="Hernandez J.R."/>
            <person name="Houck J."/>
            <person name="Hostin D."/>
            <person name="Houston K.A."/>
            <person name="Howland T.J."/>
            <person name="Wei M.-H."/>
            <person name="Ibegwam C."/>
            <person name="Jalali M."/>
            <person name="Kalush F."/>
            <person name="Karpen G.H."/>
            <person name="Ke Z."/>
            <person name="Kennison J.A."/>
            <person name="Ketchum K.A."/>
            <person name="Kimmel B.E."/>
            <person name="Kodira C.D."/>
            <person name="Kraft C.L."/>
            <person name="Kravitz S."/>
            <person name="Kulp D."/>
            <person name="Lai Z."/>
            <person name="Lasko P."/>
            <person name="Lei Y."/>
            <person name="Levitsky A.A."/>
            <person name="Li J.H."/>
            <person name="Li Z."/>
            <person name="Liang Y."/>
            <person name="Lin X."/>
            <person name="Liu X."/>
            <person name="Mattei B."/>
            <person name="McIntosh T.C."/>
            <person name="McLeod M.P."/>
            <person name="McPherson D."/>
            <person name="Merkulov G."/>
            <person name="Milshina N.V."/>
            <person name="Mobarry C."/>
            <person name="Morris J."/>
            <person name="Moshrefi A."/>
            <person name="Mount S.M."/>
            <person name="Moy M."/>
            <person name="Murphy B."/>
            <person name="Murphy L."/>
            <person name="Muzny D.M."/>
            <person name="Nelson D.L."/>
            <person name="Nelson D.R."/>
            <person name="Nelson K.A."/>
            <person name="Nixon K."/>
            <person name="Nusskern D.R."/>
            <person name="Pacleb J.M."/>
            <person name="Palazzolo M."/>
            <person name="Pittman G.S."/>
            <person name="Pan S."/>
            <person name="Pollard J."/>
            <person name="Puri V."/>
            <person name="Reese M.G."/>
            <person name="Reinert K."/>
            <person name="Remington K."/>
            <person name="Saunders R.D.C."/>
            <person name="Scheeler F."/>
            <person name="Shen H."/>
            <person name="Shue B.C."/>
            <person name="Siden-Kiamos I."/>
            <person name="Simpson M."/>
            <person name="Skupski M.P."/>
            <person name="Smith T.J."/>
            <person name="Spier E."/>
            <person name="Spradling A.C."/>
            <person name="Stapleton M."/>
            <person name="Strong R."/>
            <person name="Sun E."/>
            <person name="Svirskas R."/>
            <person name="Tector C."/>
            <person name="Turner R."/>
            <person name="Venter E."/>
            <person name="Wang A.H."/>
            <person name="Wang X."/>
            <person name="Wang Z.-Y."/>
            <person name="Wassarman D.A."/>
            <person name="Weinstock G.M."/>
            <person name="Weissenbach J."/>
            <person name="Williams S.M."/>
            <person name="Woodage T."/>
            <person name="Worley K.C."/>
            <person name="Wu D."/>
            <person name="Yang S."/>
            <person name="Yao Q.A."/>
            <person name="Ye J."/>
            <person name="Yeh R.-F."/>
            <person name="Zaveri J.S."/>
            <person name="Zhan M."/>
            <person name="Zhang G."/>
            <person name="Zhao Q."/>
            <person name="Zheng L."/>
            <person name="Zheng X.H."/>
            <person name="Zhong F.N."/>
            <person name="Zhong W."/>
            <person name="Zhou X."/>
            <person name="Zhu S.C."/>
            <person name="Zhu X."/>
            <person name="Smith H.O."/>
            <person name="Gibbs R.A."/>
            <person name="Myers E.W."/>
            <person name="Rubin G.M."/>
            <person name="Venter J.C."/>
        </authorList>
    </citation>
    <scope>NUCLEOTIDE SEQUENCE [LARGE SCALE GENOMIC DNA]</scope>
    <source>
        <strain>Berkeley</strain>
    </source>
</reference>
<reference key="3">
    <citation type="journal article" date="2002" name="Genome Biol.">
        <title>Annotation of the Drosophila melanogaster euchromatic genome: a systematic review.</title>
        <authorList>
            <person name="Misra S."/>
            <person name="Crosby M.A."/>
            <person name="Mungall C.J."/>
            <person name="Matthews B.B."/>
            <person name="Campbell K.S."/>
            <person name="Hradecky P."/>
            <person name="Huang Y."/>
            <person name="Kaminker J.S."/>
            <person name="Millburn G.H."/>
            <person name="Prochnik S.E."/>
            <person name="Smith C.D."/>
            <person name="Tupy J.L."/>
            <person name="Whitfield E.J."/>
            <person name="Bayraktaroglu L."/>
            <person name="Berman B.P."/>
            <person name="Bettencourt B.R."/>
            <person name="Celniker S.E."/>
            <person name="de Grey A.D.N.J."/>
            <person name="Drysdale R.A."/>
            <person name="Harris N.L."/>
            <person name="Richter J."/>
            <person name="Russo S."/>
            <person name="Schroeder A.J."/>
            <person name="Shu S.Q."/>
            <person name="Stapleton M."/>
            <person name="Yamada C."/>
            <person name="Ashburner M."/>
            <person name="Gelbart W.M."/>
            <person name="Rubin G.M."/>
            <person name="Lewis S.E."/>
        </authorList>
    </citation>
    <scope>GENOME REANNOTATION</scope>
    <source>
        <strain>Berkeley</strain>
    </source>
</reference>
<reference key="4">
    <citation type="journal article" date="2008" name="J. Proteome Res.">
        <title>Phosphoproteome analysis of Drosophila melanogaster embryos.</title>
        <authorList>
            <person name="Zhai B."/>
            <person name="Villen J."/>
            <person name="Beausoleil S.A."/>
            <person name="Mintseris J."/>
            <person name="Gygi S.P."/>
        </authorList>
    </citation>
    <scope>PHOSPHORYLATION [LARGE SCALE ANALYSIS] AT SER-99 AND SER-104</scope>
    <scope>IDENTIFICATION BY MASS SPECTROMETRY</scope>
    <source>
        <tissue>Embryo</tissue>
    </source>
</reference>